<evidence type="ECO:0000255" key="1"/>
<evidence type="ECO:0000305" key="2"/>
<protein>
    <recommendedName>
        <fullName>Uncharacterized protein aq_2157</fullName>
    </recommendedName>
</protein>
<gene>
    <name type="ordered locus">aq_2157</name>
</gene>
<name>Y2157_AQUAE</name>
<dbReference type="EMBL" id="AE000657">
    <property type="protein sequence ID" value="AAC07885.1"/>
    <property type="molecule type" value="Genomic_DNA"/>
</dbReference>
<dbReference type="PIR" id="B70485">
    <property type="entry name" value="B70485"/>
</dbReference>
<dbReference type="RefSeq" id="NP_214479.1">
    <property type="nucleotide sequence ID" value="NC_000918.1"/>
</dbReference>
<dbReference type="STRING" id="224324.aq_2157"/>
<dbReference type="EnsemblBacteria" id="AAC07885">
    <property type="protein sequence ID" value="AAC07885"/>
    <property type="gene ID" value="aq_2157"/>
</dbReference>
<dbReference type="KEGG" id="aae:aq_2157"/>
<dbReference type="eggNOG" id="COG2389">
    <property type="taxonomic scope" value="Bacteria"/>
</dbReference>
<dbReference type="HOGENOM" id="CLU_111923_1_0_0"/>
<dbReference type="InParanoid" id="O67910"/>
<dbReference type="OrthoDB" id="69351at2"/>
<dbReference type="Proteomes" id="UP000000798">
    <property type="component" value="Chromosome"/>
</dbReference>
<dbReference type="GO" id="GO:0005886">
    <property type="term" value="C:plasma membrane"/>
    <property type="evidence" value="ECO:0007669"/>
    <property type="project" value="UniProtKB-SubCell"/>
</dbReference>
<dbReference type="InterPro" id="IPR019250">
    <property type="entry name" value="DUF2227_metal-bd"/>
</dbReference>
<dbReference type="PANTHER" id="PTHR39085">
    <property type="entry name" value="SLL0924 PROTEIN"/>
    <property type="match status" value="1"/>
</dbReference>
<dbReference type="PANTHER" id="PTHR39085:SF1">
    <property type="entry name" value="SLL0924 PROTEIN"/>
    <property type="match status" value="1"/>
</dbReference>
<dbReference type="Pfam" id="PF09988">
    <property type="entry name" value="DUF2227"/>
    <property type="match status" value="1"/>
</dbReference>
<comment type="subcellular location">
    <subcellularLocation>
        <location evidence="2">Cell membrane</location>
        <topology evidence="2">Multi-pass membrane protein</topology>
    </subcellularLocation>
</comment>
<sequence length="141" mass="16618">MLVPQDYRIPFGIGYLLGTFFLSPDLDLHFSKPSQRWKFLKFLWFPFWVFSRHRGITHVPFLGTLVKLFYLIFIFFFLYFAVLGVLSILGFAPKELLSFDPFAFINEFLKSEKGFFFILGLIVADLLHIVLDIVSSFIKRF</sequence>
<proteinExistence type="predicted"/>
<reference key="1">
    <citation type="journal article" date="1998" name="Nature">
        <title>The complete genome of the hyperthermophilic bacterium Aquifex aeolicus.</title>
        <authorList>
            <person name="Deckert G."/>
            <person name="Warren P.V."/>
            <person name="Gaasterland T."/>
            <person name="Young W.G."/>
            <person name="Lenox A.L."/>
            <person name="Graham D.E."/>
            <person name="Overbeek R."/>
            <person name="Snead M.A."/>
            <person name="Keller M."/>
            <person name="Aujay M."/>
            <person name="Huber R."/>
            <person name="Feldman R.A."/>
            <person name="Short J.M."/>
            <person name="Olsen G.J."/>
            <person name="Swanson R.V."/>
        </authorList>
    </citation>
    <scope>NUCLEOTIDE SEQUENCE [LARGE SCALE GENOMIC DNA]</scope>
    <source>
        <strain>VF5</strain>
    </source>
</reference>
<accession>O67910</accession>
<organism>
    <name type="scientific">Aquifex aeolicus (strain VF5)</name>
    <dbReference type="NCBI Taxonomy" id="224324"/>
    <lineage>
        <taxon>Bacteria</taxon>
        <taxon>Pseudomonadati</taxon>
        <taxon>Aquificota</taxon>
        <taxon>Aquificia</taxon>
        <taxon>Aquificales</taxon>
        <taxon>Aquificaceae</taxon>
        <taxon>Aquifex</taxon>
    </lineage>
</organism>
<keyword id="KW-1003">Cell membrane</keyword>
<keyword id="KW-0472">Membrane</keyword>
<keyword id="KW-1185">Reference proteome</keyword>
<keyword id="KW-0812">Transmembrane</keyword>
<keyword id="KW-1133">Transmembrane helix</keyword>
<feature type="chain" id="PRO_0000186975" description="Uncharacterized protein aq_2157">
    <location>
        <begin position="1"/>
        <end position="141"/>
    </location>
</feature>
<feature type="transmembrane region" description="Helical" evidence="1">
    <location>
        <begin position="7"/>
        <end position="24"/>
    </location>
</feature>
<feature type="transmembrane region" description="Helical" evidence="1">
    <location>
        <begin position="39"/>
        <end position="56"/>
    </location>
</feature>
<feature type="transmembrane region" description="Helical" evidence="1">
    <location>
        <begin position="69"/>
        <end position="91"/>
    </location>
</feature>
<feature type="transmembrane region" description="Helical" evidence="1">
    <location>
        <begin position="116"/>
        <end position="138"/>
    </location>
</feature>